<name>CCKN_MOUSE</name>
<evidence type="ECO:0000250" key="1"/>
<evidence type="ECO:0000250" key="2">
    <source>
        <dbReference type="UniProtKB" id="Q9TS44"/>
    </source>
</evidence>
<evidence type="ECO:0000255" key="3"/>
<evidence type="ECO:0000269" key="4">
    <source>
    </source>
</evidence>
<evidence type="ECO:0000269" key="5">
    <source>
    </source>
</evidence>
<evidence type="ECO:0000305" key="6"/>
<dbReference type="EMBL" id="X59521">
    <property type="protein sequence ID" value="CAB94216.1"/>
    <property type="molecule type" value="Genomic_DNA"/>
</dbReference>
<dbReference type="EMBL" id="X59522">
    <property type="protein sequence ID" value="CAB94216.1"/>
    <property type="status" value="JOINED"/>
    <property type="molecule type" value="Genomic_DNA"/>
</dbReference>
<dbReference type="EMBL" id="AK002677">
    <property type="protein sequence ID" value="BAB22279.1"/>
    <property type="molecule type" value="mRNA"/>
</dbReference>
<dbReference type="EMBL" id="M11739">
    <property type="protein sequence ID" value="AAA37382.1"/>
    <property type="molecule type" value="mRNA"/>
</dbReference>
<dbReference type="CCDS" id="CCDS23631.1"/>
<dbReference type="PIR" id="S22563">
    <property type="entry name" value="S22563"/>
</dbReference>
<dbReference type="RefSeq" id="NP_001271437.1">
    <property type="nucleotide sequence ID" value="NM_001284508.2"/>
</dbReference>
<dbReference type="RefSeq" id="NP_001397165.1">
    <property type="nucleotide sequence ID" value="NM_001410236.1"/>
</dbReference>
<dbReference type="RefSeq" id="NP_112438.1">
    <property type="nucleotide sequence ID" value="NM_031161.5"/>
</dbReference>
<dbReference type="RefSeq" id="XP_017168605.1">
    <property type="nucleotide sequence ID" value="XM_017313116.1"/>
</dbReference>
<dbReference type="SMR" id="P09240"/>
<dbReference type="BioGRID" id="198541">
    <property type="interactions" value="3"/>
</dbReference>
<dbReference type="FunCoup" id="P09240">
    <property type="interactions" value="436"/>
</dbReference>
<dbReference type="STRING" id="10090.ENSMUSP00000149679"/>
<dbReference type="PhosphoSitePlus" id="P09240"/>
<dbReference type="PaxDb" id="10090-ENSMUSP00000035120"/>
<dbReference type="PeptideAtlas" id="P09240"/>
<dbReference type="ProteomicsDB" id="265611"/>
<dbReference type="Antibodypedia" id="29187">
    <property type="antibodies" value="249 antibodies from 34 providers"/>
</dbReference>
<dbReference type="DNASU" id="12424"/>
<dbReference type="Ensembl" id="ENSMUST00000035120.6">
    <property type="protein sequence ID" value="ENSMUSP00000035120.5"/>
    <property type="gene ID" value="ENSMUSG00000032532.8"/>
</dbReference>
<dbReference type="Ensembl" id="ENSMUST00000215228.2">
    <property type="protein sequence ID" value="ENSMUSP00000149679.2"/>
    <property type="gene ID" value="ENSMUSG00000032532.8"/>
</dbReference>
<dbReference type="GeneID" id="12424"/>
<dbReference type="KEGG" id="mmu:12424"/>
<dbReference type="UCSC" id="uc009sdg.3">
    <property type="organism name" value="mouse"/>
</dbReference>
<dbReference type="AGR" id="MGI:88297"/>
<dbReference type="CTD" id="885"/>
<dbReference type="MGI" id="MGI:88297">
    <property type="gene designation" value="Cck"/>
</dbReference>
<dbReference type="VEuPathDB" id="HostDB:ENSMUSG00000032532"/>
<dbReference type="eggNOG" id="ENOG502S472">
    <property type="taxonomic scope" value="Eukaryota"/>
</dbReference>
<dbReference type="GeneTree" id="ENSGT00390000003571"/>
<dbReference type="HOGENOM" id="CLU_169783_0_0_1"/>
<dbReference type="InParanoid" id="P09240"/>
<dbReference type="OMA" id="NTNPYMG"/>
<dbReference type="OrthoDB" id="9862982at2759"/>
<dbReference type="PhylomeDB" id="P09240"/>
<dbReference type="TreeFam" id="TF333419"/>
<dbReference type="Reactome" id="R-MMU-375276">
    <property type="pathway name" value="Peptide ligand-binding receptors"/>
</dbReference>
<dbReference type="Reactome" id="R-MMU-416476">
    <property type="pathway name" value="G alpha (q) signalling events"/>
</dbReference>
<dbReference type="BioGRID-ORCS" id="12424">
    <property type="hits" value="2 hits in 77 CRISPR screens"/>
</dbReference>
<dbReference type="ChiTaRS" id="Cck">
    <property type="organism name" value="mouse"/>
</dbReference>
<dbReference type="PRO" id="PR:P09240"/>
<dbReference type="Proteomes" id="UP000000589">
    <property type="component" value="Chromosome 9"/>
</dbReference>
<dbReference type="RNAct" id="P09240">
    <property type="molecule type" value="protein"/>
</dbReference>
<dbReference type="Bgee" id="ENSMUSG00000032532">
    <property type="expression patterns" value="Expressed in primary motor cortex and 143 other cell types or tissues"/>
</dbReference>
<dbReference type="ExpressionAtlas" id="P09240">
    <property type="expression patterns" value="baseline and differential"/>
</dbReference>
<dbReference type="GO" id="GO:0030424">
    <property type="term" value="C:axon"/>
    <property type="evidence" value="ECO:0000314"/>
    <property type="project" value="MGI"/>
</dbReference>
<dbReference type="GO" id="GO:0005576">
    <property type="term" value="C:extracellular region"/>
    <property type="evidence" value="ECO:0007669"/>
    <property type="project" value="UniProtKB-SubCell"/>
</dbReference>
<dbReference type="GO" id="GO:0005184">
    <property type="term" value="F:neuropeptide hormone activity"/>
    <property type="evidence" value="ECO:0000314"/>
    <property type="project" value="MGI"/>
</dbReference>
<dbReference type="GO" id="GO:0051428">
    <property type="term" value="F:peptide hormone receptor binding"/>
    <property type="evidence" value="ECO:0007669"/>
    <property type="project" value="Ensembl"/>
</dbReference>
<dbReference type="GO" id="GO:0048018">
    <property type="term" value="F:receptor ligand activity"/>
    <property type="evidence" value="ECO:0000353"/>
    <property type="project" value="MGI"/>
</dbReference>
<dbReference type="GO" id="GO:0007409">
    <property type="term" value="P:axonogenesis"/>
    <property type="evidence" value="ECO:0000314"/>
    <property type="project" value="MGI"/>
</dbReference>
<dbReference type="GO" id="GO:0038188">
    <property type="term" value="P:cholecystokinin signaling pathway"/>
    <property type="evidence" value="ECO:0000353"/>
    <property type="project" value="MGI"/>
</dbReference>
<dbReference type="GO" id="GO:0007586">
    <property type="term" value="P:digestion"/>
    <property type="evidence" value="ECO:0007669"/>
    <property type="project" value="InterPro"/>
</dbReference>
<dbReference type="GO" id="GO:0042755">
    <property type="term" value="P:eating behavior"/>
    <property type="evidence" value="ECO:0000314"/>
    <property type="project" value="MGI"/>
</dbReference>
<dbReference type="GO" id="GO:0001764">
    <property type="term" value="P:neuron migration"/>
    <property type="evidence" value="ECO:0000314"/>
    <property type="project" value="MGI"/>
</dbReference>
<dbReference type="InterPro" id="IPR015499">
    <property type="entry name" value="CCK-like"/>
</dbReference>
<dbReference type="InterPro" id="IPR001651">
    <property type="entry name" value="Gastrin/CCK"/>
</dbReference>
<dbReference type="InterPro" id="IPR013152">
    <property type="entry name" value="Gastrin/cholecystokinin_CS"/>
</dbReference>
<dbReference type="PANTHER" id="PTHR10786">
    <property type="entry name" value="CHOLECYSTOKININ"/>
    <property type="match status" value="1"/>
</dbReference>
<dbReference type="PANTHER" id="PTHR10786:SF0">
    <property type="entry name" value="CHOLECYSTOKININ"/>
    <property type="match status" value="1"/>
</dbReference>
<dbReference type="Pfam" id="PF00918">
    <property type="entry name" value="Gastrin"/>
    <property type="match status" value="1"/>
</dbReference>
<dbReference type="SMART" id="SM00029">
    <property type="entry name" value="GASTRIN"/>
    <property type="match status" value="1"/>
</dbReference>
<dbReference type="PROSITE" id="PS00259">
    <property type="entry name" value="GASTRIN"/>
    <property type="match status" value="1"/>
</dbReference>
<accession>P09240</accession>
<accession>Q53WS9</accession>
<accession>Q9DCL5</accession>
<reference key="1">
    <citation type="journal article" date="1991" name="Nucleic Acids Res.">
        <title>Molecular cloning of the mouse CCK gene: expression in different brain regions and during cortical development.</title>
        <authorList>
            <person name="Vitale M."/>
            <person name="Vashishtha A."/>
            <person name="Linzer E."/>
            <person name="Powell D.J."/>
            <person name="Friedman J.M."/>
        </authorList>
    </citation>
    <scope>NUCLEOTIDE SEQUENCE [GENOMIC DNA]</scope>
    <source>
        <strain>129/3J</strain>
    </source>
</reference>
<reference key="2">
    <citation type="journal article" date="2005" name="Science">
        <title>The transcriptional landscape of the mammalian genome.</title>
        <authorList>
            <person name="Carninci P."/>
            <person name="Kasukawa T."/>
            <person name="Katayama S."/>
            <person name="Gough J."/>
            <person name="Frith M.C."/>
            <person name="Maeda N."/>
            <person name="Oyama R."/>
            <person name="Ravasi T."/>
            <person name="Lenhard B."/>
            <person name="Wells C."/>
            <person name="Kodzius R."/>
            <person name="Shimokawa K."/>
            <person name="Bajic V.B."/>
            <person name="Brenner S.E."/>
            <person name="Batalov S."/>
            <person name="Forrest A.R."/>
            <person name="Zavolan M."/>
            <person name="Davis M.J."/>
            <person name="Wilming L.G."/>
            <person name="Aidinis V."/>
            <person name="Allen J.E."/>
            <person name="Ambesi-Impiombato A."/>
            <person name="Apweiler R."/>
            <person name="Aturaliya R.N."/>
            <person name="Bailey T.L."/>
            <person name="Bansal M."/>
            <person name="Baxter L."/>
            <person name="Beisel K.W."/>
            <person name="Bersano T."/>
            <person name="Bono H."/>
            <person name="Chalk A.M."/>
            <person name="Chiu K.P."/>
            <person name="Choudhary V."/>
            <person name="Christoffels A."/>
            <person name="Clutterbuck D.R."/>
            <person name="Crowe M.L."/>
            <person name="Dalla E."/>
            <person name="Dalrymple B.P."/>
            <person name="de Bono B."/>
            <person name="Della Gatta G."/>
            <person name="di Bernardo D."/>
            <person name="Down T."/>
            <person name="Engstrom P."/>
            <person name="Fagiolini M."/>
            <person name="Faulkner G."/>
            <person name="Fletcher C.F."/>
            <person name="Fukushima T."/>
            <person name="Furuno M."/>
            <person name="Futaki S."/>
            <person name="Gariboldi M."/>
            <person name="Georgii-Hemming P."/>
            <person name="Gingeras T.R."/>
            <person name="Gojobori T."/>
            <person name="Green R.E."/>
            <person name="Gustincich S."/>
            <person name="Harbers M."/>
            <person name="Hayashi Y."/>
            <person name="Hensch T.K."/>
            <person name="Hirokawa N."/>
            <person name="Hill D."/>
            <person name="Huminiecki L."/>
            <person name="Iacono M."/>
            <person name="Ikeo K."/>
            <person name="Iwama A."/>
            <person name="Ishikawa T."/>
            <person name="Jakt M."/>
            <person name="Kanapin A."/>
            <person name="Katoh M."/>
            <person name="Kawasawa Y."/>
            <person name="Kelso J."/>
            <person name="Kitamura H."/>
            <person name="Kitano H."/>
            <person name="Kollias G."/>
            <person name="Krishnan S.P."/>
            <person name="Kruger A."/>
            <person name="Kummerfeld S.K."/>
            <person name="Kurochkin I.V."/>
            <person name="Lareau L.F."/>
            <person name="Lazarevic D."/>
            <person name="Lipovich L."/>
            <person name="Liu J."/>
            <person name="Liuni S."/>
            <person name="McWilliam S."/>
            <person name="Madan Babu M."/>
            <person name="Madera M."/>
            <person name="Marchionni L."/>
            <person name="Matsuda H."/>
            <person name="Matsuzawa S."/>
            <person name="Miki H."/>
            <person name="Mignone F."/>
            <person name="Miyake S."/>
            <person name="Morris K."/>
            <person name="Mottagui-Tabar S."/>
            <person name="Mulder N."/>
            <person name="Nakano N."/>
            <person name="Nakauchi H."/>
            <person name="Ng P."/>
            <person name="Nilsson R."/>
            <person name="Nishiguchi S."/>
            <person name="Nishikawa S."/>
            <person name="Nori F."/>
            <person name="Ohara O."/>
            <person name="Okazaki Y."/>
            <person name="Orlando V."/>
            <person name="Pang K.C."/>
            <person name="Pavan W.J."/>
            <person name="Pavesi G."/>
            <person name="Pesole G."/>
            <person name="Petrovsky N."/>
            <person name="Piazza S."/>
            <person name="Reed J."/>
            <person name="Reid J.F."/>
            <person name="Ring B.Z."/>
            <person name="Ringwald M."/>
            <person name="Rost B."/>
            <person name="Ruan Y."/>
            <person name="Salzberg S.L."/>
            <person name="Sandelin A."/>
            <person name="Schneider C."/>
            <person name="Schoenbach C."/>
            <person name="Sekiguchi K."/>
            <person name="Semple C.A."/>
            <person name="Seno S."/>
            <person name="Sessa L."/>
            <person name="Sheng Y."/>
            <person name="Shibata Y."/>
            <person name="Shimada H."/>
            <person name="Shimada K."/>
            <person name="Silva D."/>
            <person name="Sinclair B."/>
            <person name="Sperling S."/>
            <person name="Stupka E."/>
            <person name="Sugiura K."/>
            <person name="Sultana R."/>
            <person name="Takenaka Y."/>
            <person name="Taki K."/>
            <person name="Tammoja K."/>
            <person name="Tan S.L."/>
            <person name="Tang S."/>
            <person name="Taylor M.S."/>
            <person name="Tegner J."/>
            <person name="Teichmann S.A."/>
            <person name="Ueda H.R."/>
            <person name="van Nimwegen E."/>
            <person name="Verardo R."/>
            <person name="Wei C.L."/>
            <person name="Yagi K."/>
            <person name="Yamanishi H."/>
            <person name="Zabarovsky E."/>
            <person name="Zhu S."/>
            <person name="Zimmer A."/>
            <person name="Hide W."/>
            <person name="Bult C."/>
            <person name="Grimmond S.M."/>
            <person name="Teasdale R.D."/>
            <person name="Liu E.T."/>
            <person name="Brusic V."/>
            <person name="Quackenbush J."/>
            <person name="Wahlestedt C."/>
            <person name="Mattick J.S."/>
            <person name="Hume D.A."/>
            <person name="Kai C."/>
            <person name="Sasaki D."/>
            <person name="Tomaru Y."/>
            <person name="Fukuda S."/>
            <person name="Kanamori-Katayama M."/>
            <person name="Suzuki M."/>
            <person name="Aoki J."/>
            <person name="Arakawa T."/>
            <person name="Iida J."/>
            <person name="Imamura K."/>
            <person name="Itoh M."/>
            <person name="Kato T."/>
            <person name="Kawaji H."/>
            <person name="Kawagashira N."/>
            <person name="Kawashima T."/>
            <person name="Kojima M."/>
            <person name="Kondo S."/>
            <person name="Konno H."/>
            <person name="Nakano K."/>
            <person name="Ninomiya N."/>
            <person name="Nishio T."/>
            <person name="Okada M."/>
            <person name="Plessy C."/>
            <person name="Shibata K."/>
            <person name="Shiraki T."/>
            <person name="Suzuki S."/>
            <person name="Tagami M."/>
            <person name="Waki K."/>
            <person name="Watahiki A."/>
            <person name="Okamura-Oho Y."/>
            <person name="Suzuki H."/>
            <person name="Kawai J."/>
            <person name="Hayashizaki Y."/>
        </authorList>
    </citation>
    <scope>NUCLEOTIDE SEQUENCE [LARGE SCALE MRNA]</scope>
    <source>
        <strain>C57BL/6J</strain>
        <tissue>Kidney</tissue>
    </source>
</reference>
<reference key="3">
    <citation type="journal article" date="1985" name="Proc. Natl. Acad. Sci. U.S.A.">
        <title>Differential expression of the mouse cholecystokinin gene during brain and gut development.</title>
        <authorList>
            <person name="Friedman J.M."/>
            <person name="Schneider B.S."/>
            <person name="Powell D.J."/>
        </authorList>
    </citation>
    <scope>NUCLEOTIDE SEQUENCE [MRNA] OF 55-115</scope>
    <scope>AMIDATION AT PHE-103</scope>
</reference>
<reference key="4">
    <citation type="journal article" date="2010" name="Cell">
        <title>A tissue-specific atlas of mouse protein phosphorylation and expression.</title>
        <authorList>
            <person name="Huttlin E.L."/>
            <person name="Jedrychowski M.P."/>
            <person name="Elias J.E."/>
            <person name="Goswami T."/>
            <person name="Rad R."/>
            <person name="Beausoleil S.A."/>
            <person name="Villen J."/>
            <person name="Haas W."/>
            <person name="Sowa M.E."/>
            <person name="Gygi S.P."/>
        </authorList>
    </citation>
    <scope>IDENTIFICATION BY MASS SPECTROMETRY [LARGE SCALE ANALYSIS]</scope>
    <source>
        <tissue>Brain</tissue>
    </source>
</reference>
<reference key="5">
    <citation type="journal article" date="2013" name="J. Clin. Invest.">
        <title>Immunoglobulin-like domain containing receptor 1 mediates fat-stimulated cholecystokinin secretion.</title>
        <authorList>
            <person name="Chandra R."/>
            <person name="Wang Y."/>
            <person name="Shahid R.A."/>
            <person name="Vigna S.R."/>
            <person name="Freedman N.J."/>
            <person name="Liddle R.A."/>
        </authorList>
    </citation>
    <scope>SUBCELLULAR LOCATION</scope>
    <scope>TISSUE SPECIFICITY</scope>
</reference>
<protein>
    <recommendedName>
        <fullName>Cholecystokinin</fullName>
        <shortName>CCK</shortName>
    </recommendedName>
    <component>
        <recommendedName>
            <fullName>Cholecystokinin-33</fullName>
            <shortName>CCK33</shortName>
        </recommendedName>
    </component>
    <component>
        <recommendedName>
            <fullName>Cholecystokinin-12</fullName>
            <shortName>CCK12</shortName>
        </recommendedName>
    </component>
    <component>
        <recommendedName>
            <fullName>Cholecystokinin-8</fullName>
            <shortName>CCK8</shortName>
        </recommendedName>
    </component>
</protein>
<proteinExistence type="evidence at protein level"/>
<gene>
    <name type="primary">Cck</name>
</gene>
<organism>
    <name type="scientific">Mus musculus</name>
    <name type="common">Mouse</name>
    <dbReference type="NCBI Taxonomy" id="10090"/>
    <lineage>
        <taxon>Eukaryota</taxon>
        <taxon>Metazoa</taxon>
        <taxon>Chordata</taxon>
        <taxon>Craniata</taxon>
        <taxon>Vertebrata</taxon>
        <taxon>Euteleostomi</taxon>
        <taxon>Mammalia</taxon>
        <taxon>Eutheria</taxon>
        <taxon>Euarchontoglires</taxon>
        <taxon>Glires</taxon>
        <taxon>Rodentia</taxon>
        <taxon>Myomorpha</taxon>
        <taxon>Muroidea</taxon>
        <taxon>Muridae</taxon>
        <taxon>Murinae</taxon>
        <taxon>Mus</taxon>
        <taxon>Mus</taxon>
    </lineage>
</organism>
<keyword id="KW-0027">Amidation</keyword>
<keyword id="KW-0165">Cleavage on pair of basic residues</keyword>
<keyword id="KW-0372">Hormone</keyword>
<keyword id="KW-1185">Reference proteome</keyword>
<keyword id="KW-0964">Secreted</keyword>
<keyword id="KW-0732">Signal</keyword>
<keyword id="KW-0765">Sulfation</keyword>
<comment type="function">
    <text evidence="2">This peptide hormone induces gall bladder contraction and the release of pancreatic enzymes in the gut. Its function in the brain is not clear. Binding to CCK-A receptors stimulates amylase release from the pancreas, binding to CCK-B receptors stimulates gastric acid secretion.</text>
</comment>
<comment type="subunit">
    <text evidence="2">Binds to CCK-A receptors in the pancreas and CCK-B receptors in the brain.</text>
</comment>
<comment type="subcellular location">
    <subcellularLocation>
        <location evidence="4">Secreted</location>
    </subcellularLocation>
</comment>
<comment type="tissue specificity">
    <text evidence="4">Expressed and secreted by discrete enteroendocrine cells that reside as single cells scattered among enterocytes in the mucosa of the small intestine. Released into the blood following ingestion of a meal.</text>
</comment>
<comment type="PTM">
    <text>The precursor is cleaved by proteases to produce a number of active cholecystokinins.</text>
</comment>
<comment type="similarity">
    <text evidence="6">Belongs to the gastrin/cholecystokinin family.</text>
</comment>
<sequence length="115" mass="12770">MKSGVCLCVVMAVLAAGALAQPVVPAEATDPVEQRAQEAPRRQLRAVLRTDGEPRARLGALLARYIQQVRKAPSGRMSVLKNLQSLDPSHRISDRDYMGWMDFGRRSAEDYEYPS</sequence>
<feature type="signal peptide" evidence="3">
    <location>
        <begin position="1"/>
        <end position="20"/>
    </location>
</feature>
<feature type="chain" id="PRO_0000010552" description="Cholecystokinin">
    <location>
        <begin position="21"/>
        <end position="115"/>
    </location>
</feature>
<feature type="propeptide" id="PRO_0000010553">
    <location>
        <begin position="21"/>
        <end position="70"/>
    </location>
</feature>
<feature type="peptide" id="PRO_0000010554" description="Cholecystokinin-33">
    <location>
        <begin position="71"/>
        <end position="103"/>
    </location>
</feature>
<feature type="peptide" id="PRO_0000010555" description="Cholecystokinin-12">
    <location>
        <begin position="92"/>
        <end position="103"/>
    </location>
</feature>
<feature type="peptide" id="PRO_0000010556" description="Cholecystokinin-8">
    <location>
        <begin position="96"/>
        <end position="103"/>
    </location>
</feature>
<feature type="propeptide" id="PRO_0000010557">
    <location>
        <begin position="107"/>
        <end position="115"/>
    </location>
</feature>
<feature type="modified residue" description="Sulfotyrosine" evidence="2">
    <location>
        <position position="97"/>
    </location>
</feature>
<feature type="modified residue" description="Phenylalanine amide" evidence="5">
    <location>
        <position position="103"/>
    </location>
</feature>
<feature type="modified residue" description="Sulfotyrosine" evidence="1">
    <location>
        <position position="111"/>
    </location>
</feature>
<feature type="modified residue" description="Sulfotyrosine" evidence="1">
    <location>
        <position position="113"/>
    </location>
</feature>
<feature type="sequence conflict" description="In Ref. 1; CAB94216." evidence="6" ref="1">
    <original>Q</original>
    <variation>E</variation>
    <location>
        <position position="37"/>
    </location>
</feature>
<feature type="sequence conflict" description="In Ref. 1; CAB94216." evidence="6" ref="1">
    <original>T</original>
    <variation>P</variation>
    <location>
        <position position="50"/>
    </location>
</feature>
<feature type="sequence conflict" description="In Ref. 1; CAB94216." evidence="6" ref="1">
    <original>G</original>
    <variation>R</variation>
    <location>
        <position position="52"/>
    </location>
</feature>